<gene>
    <name type="primary">yqfB</name>
    <name type="ordered locus">STM3050</name>
</gene>
<evidence type="ECO:0000255" key="1"/>
<evidence type="ECO:0000255" key="2">
    <source>
        <dbReference type="HAMAP-Rule" id="MF_00684"/>
    </source>
</evidence>
<comment type="function">
    <text evidence="2">Catalyzes the hydrolysis of N(4)-acetylcytidine (ac4C).</text>
</comment>
<comment type="catalytic activity">
    <reaction evidence="2">
        <text>N(4)-acetylcytidine + H2O = cytidine + acetate + H(+)</text>
        <dbReference type="Rhea" id="RHEA:62932"/>
        <dbReference type="ChEBI" id="CHEBI:15377"/>
        <dbReference type="ChEBI" id="CHEBI:15378"/>
        <dbReference type="ChEBI" id="CHEBI:17562"/>
        <dbReference type="ChEBI" id="CHEBI:30089"/>
        <dbReference type="ChEBI" id="CHEBI:70989"/>
        <dbReference type="EC" id="3.5.1.135"/>
    </reaction>
</comment>
<comment type="catalytic activity">
    <reaction evidence="2">
        <text>N(4)-acetyl-2'-deoxycytidine + H2O = 2'-deoxycytidine + acetate + H(+)</text>
        <dbReference type="Rhea" id="RHEA:62936"/>
        <dbReference type="ChEBI" id="CHEBI:15377"/>
        <dbReference type="ChEBI" id="CHEBI:15378"/>
        <dbReference type="ChEBI" id="CHEBI:15698"/>
        <dbReference type="ChEBI" id="CHEBI:30089"/>
        <dbReference type="ChEBI" id="CHEBI:146133"/>
        <dbReference type="EC" id="3.5.1.135"/>
    </reaction>
</comment>
<comment type="catalytic activity">
    <reaction evidence="2">
        <text>N(4)-acetylcytosine + H2O = cytosine + acetate + H(+)</text>
        <dbReference type="Rhea" id="RHEA:62940"/>
        <dbReference type="ChEBI" id="CHEBI:15377"/>
        <dbReference type="ChEBI" id="CHEBI:15378"/>
        <dbReference type="ChEBI" id="CHEBI:16040"/>
        <dbReference type="ChEBI" id="CHEBI:30089"/>
        <dbReference type="ChEBI" id="CHEBI:146134"/>
        <dbReference type="EC" id="3.5.1.135"/>
    </reaction>
</comment>
<comment type="similarity">
    <text evidence="2">Belongs to the N(4)-acetylcytidine amidohydrolase family.</text>
</comment>
<protein>
    <recommendedName>
        <fullName evidence="2">N(4)-acetylcytidine amidohydrolase</fullName>
        <shortName evidence="2">ac4C amidohydrolase</shortName>
        <ecNumber evidence="2">3.5.1.135</ecNumber>
    </recommendedName>
</protein>
<sequence length="103" mass="11899">MQPNDITFFQRFQNDILAGRKTITIRDASESHFKAGDVLRVGRFEDDGYFCTIEVTGTSTVTLDTLNEKHAQQENMSLDELKRVIAEIYPNQTQFYVIDFKCL</sequence>
<keyword id="KW-0378">Hydrolase</keyword>
<keyword id="KW-1185">Reference proteome</keyword>
<feature type="chain" id="PRO_0000214606" description="N(4)-acetylcytidine amidohydrolase">
    <location>
        <begin position="1"/>
        <end position="103"/>
    </location>
</feature>
<feature type="domain" description="ASCH" evidence="1">
    <location>
        <begin position="6"/>
        <end position="94"/>
    </location>
</feature>
<feature type="active site" description="Proton acceptor" evidence="2">
    <location>
        <position position="21"/>
    </location>
</feature>
<feature type="active site" description="Nucleophile" evidence="2">
    <location>
        <position position="24"/>
    </location>
</feature>
<feature type="active site" description="Proton donor" evidence="2">
    <location>
        <position position="74"/>
    </location>
</feature>
<organism>
    <name type="scientific">Salmonella typhimurium (strain LT2 / SGSC1412 / ATCC 700720)</name>
    <dbReference type="NCBI Taxonomy" id="99287"/>
    <lineage>
        <taxon>Bacteria</taxon>
        <taxon>Pseudomonadati</taxon>
        <taxon>Pseudomonadota</taxon>
        <taxon>Gammaproteobacteria</taxon>
        <taxon>Enterobacterales</taxon>
        <taxon>Enterobacteriaceae</taxon>
        <taxon>Salmonella</taxon>
    </lineage>
</organism>
<proteinExistence type="inferred from homology"/>
<dbReference type="EC" id="3.5.1.135" evidence="2"/>
<dbReference type="EMBL" id="AE006468">
    <property type="protein sequence ID" value="AAL21925.1"/>
    <property type="molecule type" value="Genomic_DNA"/>
</dbReference>
<dbReference type="RefSeq" id="NP_461966.1">
    <property type="nucleotide sequence ID" value="NC_003197.2"/>
</dbReference>
<dbReference type="RefSeq" id="WP_001182976.1">
    <property type="nucleotide sequence ID" value="NC_003197.2"/>
</dbReference>
<dbReference type="SMR" id="Q8ZM79"/>
<dbReference type="STRING" id="99287.STM3050"/>
<dbReference type="PaxDb" id="99287-STM3050"/>
<dbReference type="DNASU" id="1254573"/>
<dbReference type="GeneID" id="1254573"/>
<dbReference type="KEGG" id="stm:STM3050"/>
<dbReference type="PATRIC" id="fig|99287.12.peg.3231"/>
<dbReference type="HOGENOM" id="CLU_152586_0_0_6"/>
<dbReference type="OMA" id="HARQENM"/>
<dbReference type="PhylomeDB" id="Q8ZM79"/>
<dbReference type="BioCyc" id="SENT99287:STM3050-MONOMER"/>
<dbReference type="Proteomes" id="UP000001014">
    <property type="component" value="Chromosome"/>
</dbReference>
<dbReference type="GO" id="GO:0005829">
    <property type="term" value="C:cytosol"/>
    <property type="evidence" value="ECO:0000318"/>
    <property type="project" value="GO_Central"/>
</dbReference>
<dbReference type="GO" id="GO:0016813">
    <property type="term" value="F:hydrolase activity, acting on carbon-nitrogen (but not peptide) bonds, in linear amidines"/>
    <property type="evidence" value="ECO:0007669"/>
    <property type="project" value="UniProtKB-UniRule"/>
</dbReference>
<dbReference type="GO" id="GO:0106251">
    <property type="term" value="F:N4-acetylcytidine amidohydrolase activity"/>
    <property type="evidence" value="ECO:0007669"/>
    <property type="project" value="RHEA"/>
</dbReference>
<dbReference type="CDD" id="cd06552">
    <property type="entry name" value="ASCH_yqfb_like"/>
    <property type="match status" value="1"/>
</dbReference>
<dbReference type="FunFam" id="2.30.130.30:FF:000001">
    <property type="entry name" value="UPF0267 protein YqfB"/>
    <property type="match status" value="1"/>
</dbReference>
<dbReference type="Gene3D" id="2.30.130.30">
    <property type="entry name" value="Hypothetical protein"/>
    <property type="match status" value="1"/>
</dbReference>
<dbReference type="HAMAP" id="MF_00684">
    <property type="entry name" value="ac4C_amidohydr"/>
    <property type="match status" value="1"/>
</dbReference>
<dbReference type="InterPro" id="IPR008314">
    <property type="entry name" value="AC4CH"/>
</dbReference>
<dbReference type="InterPro" id="IPR007374">
    <property type="entry name" value="ASCH_domain"/>
</dbReference>
<dbReference type="InterPro" id="IPR015947">
    <property type="entry name" value="PUA-like_sf"/>
</dbReference>
<dbReference type="NCBIfam" id="NF003443">
    <property type="entry name" value="PRK04980.1"/>
    <property type="match status" value="1"/>
</dbReference>
<dbReference type="PANTHER" id="PTHR38088">
    <property type="entry name" value="UCP029143 FAMILY PROTEIN"/>
    <property type="match status" value="1"/>
</dbReference>
<dbReference type="PANTHER" id="PTHR38088:SF2">
    <property type="entry name" value="UCP029143 FAMILY PROTEIN"/>
    <property type="match status" value="1"/>
</dbReference>
<dbReference type="Pfam" id="PF04266">
    <property type="entry name" value="ASCH"/>
    <property type="match status" value="1"/>
</dbReference>
<dbReference type="PIRSF" id="PIRSF029143">
    <property type="entry name" value="UCP029143"/>
    <property type="match status" value="1"/>
</dbReference>
<dbReference type="SMART" id="SM01022">
    <property type="entry name" value="ASCH"/>
    <property type="match status" value="1"/>
</dbReference>
<dbReference type="SUPFAM" id="SSF88697">
    <property type="entry name" value="PUA domain-like"/>
    <property type="match status" value="1"/>
</dbReference>
<reference key="1">
    <citation type="journal article" date="2001" name="Nature">
        <title>Complete genome sequence of Salmonella enterica serovar Typhimurium LT2.</title>
        <authorList>
            <person name="McClelland M."/>
            <person name="Sanderson K.E."/>
            <person name="Spieth J."/>
            <person name="Clifton S.W."/>
            <person name="Latreille P."/>
            <person name="Courtney L."/>
            <person name="Porwollik S."/>
            <person name="Ali J."/>
            <person name="Dante M."/>
            <person name="Du F."/>
            <person name="Hou S."/>
            <person name="Layman D."/>
            <person name="Leonard S."/>
            <person name="Nguyen C."/>
            <person name="Scott K."/>
            <person name="Holmes A."/>
            <person name="Grewal N."/>
            <person name="Mulvaney E."/>
            <person name="Ryan E."/>
            <person name="Sun H."/>
            <person name="Florea L."/>
            <person name="Miller W."/>
            <person name="Stoneking T."/>
            <person name="Nhan M."/>
            <person name="Waterston R."/>
            <person name="Wilson R.K."/>
        </authorList>
    </citation>
    <scope>NUCLEOTIDE SEQUENCE [LARGE SCALE GENOMIC DNA]</scope>
    <source>
        <strain>LT2 / SGSC1412 / ATCC 700720</strain>
    </source>
</reference>
<accession>Q8ZM79</accession>
<name>AC4CH_SALTY</name>